<organism>
    <name type="scientific">Rattus norvegicus</name>
    <name type="common">Rat</name>
    <dbReference type="NCBI Taxonomy" id="10116"/>
    <lineage>
        <taxon>Eukaryota</taxon>
        <taxon>Metazoa</taxon>
        <taxon>Chordata</taxon>
        <taxon>Craniata</taxon>
        <taxon>Vertebrata</taxon>
        <taxon>Euteleostomi</taxon>
        <taxon>Mammalia</taxon>
        <taxon>Eutheria</taxon>
        <taxon>Euarchontoglires</taxon>
        <taxon>Glires</taxon>
        <taxon>Rodentia</taxon>
        <taxon>Myomorpha</taxon>
        <taxon>Muroidea</taxon>
        <taxon>Muridae</taxon>
        <taxon>Murinae</taxon>
        <taxon>Rattus</taxon>
    </lineage>
</organism>
<gene>
    <name type="primary">Adarb2</name>
    <name type="synonym">Adar3</name>
    <name type="synonym">Red2</name>
</gene>
<dbReference type="EC" id="3.5.-.-"/>
<dbReference type="EMBL" id="U74586">
    <property type="protein sequence ID" value="AAB41862.1"/>
    <property type="molecule type" value="mRNA"/>
</dbReference>
<dbReference type="RefSeq" id="NP_579836.1">
    <property type="nucleotide sequence ID" value="NM_133302.2"/>
</dbReference>
<dbReference type="SMR" id="P97616"/>
<dbReference type="FunCoup" id="P97616">
    <property type="interactions" value="945"/>
</dbReference>
<dbReference type="STRING" id="10116.ENSRNOP00000073876"/>
<dbReference type="PhosphoSitePlus" id="P97616"/>
<dbReference type="jPOST" id="P97616"/>
<dbReference type="PaxDb" id="10116-ENSRNOP00000047468"/>
<dbReference type="GeneID" id="117088"/>
<dbReference type="KEGG" id="rno:117088"/>
<dbReference type="UCSC" id="RGD:621519">
    <property type="organism name" value="rat"/>
</dbReference>
<dbReference type="AGR" id="RGD:621519"/>
<dbReference type="CTD" id="105"/>
<dbReference type="RGD" id="621519">
    <property type="gene designation" value="Adarb2"/>
</dbReference>
<dbReference type="eggNOG" id="KOG2777">
    <property type="taxonomic scope" value="Eukaryota"/>
</dbReference>
<dbReference type="InParanoid" id="P97616"/>
<dbReference type="OrthoDB" id="85590at9989"/>
<dbReference type="PhylomeDB" id="P97616"/>
<dbReference type="PRO" id="PR:P97616"/>
<dbReference type="Proteomes" id="UP000002494">
    <property type="component" value="Unplaced"/>
</dbReference>
<dbReference type="GO" id="GO:0005737">
    <property type="term" value="C:cytoplasm"/>
    <property type="evidence" value="ECO:0000318"/>
    <property type="project" value="GO_Central"/>
</dbReference>
<dbReference type="GO" id="GO:0005730">
    <property type="term" value="C:nucleolus"/>
    <property type="evidence" value="ECO:0000318"/>
    <property type="project" value="GO_Central"/>
</dbReference>
<dbReference type="GO" id="GO:0003726">
    <property type="term" value="F:double-stranded RNA adenosine deaminase activity"/>
    <property type="evidence" value="ECO:0000318"/>
    <property type="project" value="GO_Central"/>
</dbReference>
<dbReference type="GO" id="GO:0003725">
    <property type="term" value="F:double-stranded RNA binding"/>
    <property type="evidence" value="ECO:0000318"/>
    <property type="project" value="GO_Central"/>
</dbReference>
<dbReference type="GO" id="GO:0046872">
    <property type="term" value="F:metal ion binding"/>
    <property type="evidence" value="ECO:0007669"/>
    <property type="project" value="UniProtKB-KW"/>
</dbReference>
<dbReference type="GO" id="GO:0008251">
    <property type="term" value="F:tRNA-specific adenosine deaminase activity"/>
    <property type="evidence" value="ECO:0000318"/>
    <property type="project" value="GO_Central"/>
</dbReference>
<dbReference type="GO" id="GO:0006382">
    <property type="term" value="P:adenosine to inosine editing"/>
    <property type="evidence" value="ECO:0000318"/>
    <property type="project" value="GO_Central"/>
</dbReference>
<dbReference type="GO" id="GO:0006397">
    <property type="term" value="P:mRNA processing"/>
    <property type="evidence" value="ECO:0007669"/>
    <property type="project" value="UniProtKB-KW"/>
</dbReference>
<dbReference type="GO" id="GO:0006396">
    <property type="term" value="P:RNA processing"/>
    <property type="evidence" value="ECO:0000318"/>
    <property type="project" value="GO_Central"/>
</dbReference>
<dbReference type="CDD" id="cd19896">
    <property type="entry name" value="DSRM_RED2_rpt1"/>
    <property type="match status" value="1"/>
</dbReference>
<dbReference type="FunFam" id="3.30.160.20:FF:000009">
    <property type="entry name" value="Adenosine deaminase RNA-specific B2 (inactive)"/>
    <property type="match status" value="1"/>
</dbReference>
<dbReference type="FunFam" id="3.30.160.20:FF:000011">
    <property type="entry name" value="double-stranded RNA-specific editase 1 isoform X1"/>
    <property type="match status" value="1"/>
</dbReference>
<dbReference type="Gene3D" id="3.30.160.20">
    <property type="match status" value="2"/>
</dbReference>
<dbReference type="InterPro" id="IPR002466">
    <property type="entry name" value="A_deamin"/>
</dbReference>
<dbReference type="InterPro" id="IPR044460">
    <property type="entry name" value="ADAR3_DSRM_1"/>
</dbReference>
<dbReference type="InterPro" id="IPR014720">
    <property type="entry name" value="dsRBD_dom"/>
</dbReference>
<dbReference type="PANTHER" id="PTHR10910:SF17">
    <property type="entry name" value="DOUBLE-STRANDED RNA-SPECIFIC EDITASE B2"/>
    <property type="match status" value="1"/>
</dbReference>
<dbReference type="PANTHER" id="PTHR10910">
    <property type="entry name" value="EUKARYOTE SPECIFIC DSRNA BINDING PROTEIN"/>
    <property type="match status" value="1"/>
</dbReference>
<dbReference type="Pfam" id="PF02137">
    <property type="entry name" value="A_deamin"/>
    <property type="match status" value="1"/>
</dbReference>
<dbReference type="Pfam" id="PF00035">
    <property type="entry name" value="dsrm"/>
    <property type="match status" value="2"/>
</dbReference>
<dbReference type="SMART" id="SM00552">
    <property type="entry name" value="ADEAMc"/>
    <property type="match status" value="1"/>
</dbReference>
<dbReference type="SMART" id="SM00358">
    <property type="entry name" value="DSRM"/>
    <property type="match status" value="2"/>
</dbReference>
<dbReference type="SUPFAM" id="SSF54768">
    <property type="entry name" value="dsRNA-binding domain-like"/>
    <property type="match status" value="2"/>
</dbReference>
<dbReference type="PROSITE" id="PS50141">
    <property type="entry name" value="A_DEAMIN_EDITASE"/>
    <property type="match status" value="1"/>
</dbReference>
<dbReference type="PROSITE" id="PS50137">
    <property type="entry name" value="DS_RBD"/>
    <property type="match status" value="2"/>
</dbReference>
<keyword id="KW-0378">Hydrolase</keyword>
<keyword id="KW-0479">Metal-binding</keyword>
<keyword id="KW-0507">mRNA processing</keyword>
<keyword id="KW-0539">Nucleus</keyword>
<keyword id="KW-1185">Reference proteome</keyword>
<keyword id="KW-0677">Repeat</keyword>
<keyword id="KW-0694">RNA-binding</keyword>
<keyword id="KW-0862">Zinc</keyword>
<name>RED2_RAT</name>
<evidence type="ECO:0000250" key="1"/>
<evidence type="ECO:0000255" key="2">
    <source>
        <dbReference type="PROSITE-ProRule" id="PRU00240"/>
    </source>
</evidence>
<evidence type="ECO:0000255" key="3">
    <source>
        <dbReference type="PROSITE-ProRule" id="PRU00266"/>
    </source>
</evidence>
<evidence type="ECO:0000256" key="4">
    <source>
        <dbReference type="SAM" id="MobiDB-lite"/>
    </source>
</evidence>
<evidence type="ECO:0000269" key="5">
    <source>
    </source>
</evidence>
<reference key="1">
    <citation type="journal article" date="1996" name="J. Biol. Chem.">
        <title>RED2, a brain-specific member of the RNA-specific adenosine deaminase family.</title>
        <authorList>
            <person name="Melcher T."/>
            <person name="Maas S."/>
            <person name="Herb A."/>
            <person name="Sprengel R."/>
            <person name="Higuchi M."/>
            <person name="Seeburg P.H."/>
        </authorList>
    </citation>
    <scope>NUCLEOTIDE SEQUENCE [MRNA]</scope>
    <scope>TISSUE SPECIFICITY</scope>
</reference>
<comment type="function">
    <text evidence="1">Lacks editing activity. It prevents the binding of other ADAR enzymes to targets in vitro, and decreases the efficiency of these enzymes. Capable of binding to dsRNA but also to ssRNA (By similarity).</text>
</comment>
<comment type="subcellular location">
    <subcellularLocation>
        <location evidence="1">Nucleus</location>
    </subcellularLocation>
</comment>
<comment type="tissue specificity">
    <text evidence="5">Brain specific.</text>
</comment>
<feature type="chain" id="PRO_0000171784" description="Double-stranded RNA-specific editase B2">
    <location>
        <begin position="1"/>
        <end position="746"/>
    </location>
</feature>
<feature type="domain" description="DRBM 1" evidence="3">
    <location>
        <begin position="126"/>
        <end position="192"/>
    </location>
</feature>
<feature type="domain" description="DRBM 2" evidence="3">
    <location>
        <begin position="284"/>
        <end position="348"/>
    </location>
</feature>
<feature type="domain" description="A to I editase" evidence="2">
    <location>
        <begin position="415"/>
        <end position="742"/>
    </location>
</feature>
<feature type="region of interest" description="Disordered" evidence="4">
    <location>
        <begin position="1"/>
        <end position="36"/>
    </location>
</feature>
<feature type="region of interest" description="R-domain (ssRNA-binding)" evidence="1">
    <location>
        <begin position="23"/>
        <end position="35"/>
    </location>
</feature>
<feature type="region of interest" description="Disordered" evidence="4">
    <location>
        <begin position="50"/>
        <end position="105"/>
    </location>
</feature>
<feature type="compositionally biased region" description="Basic residues" evidence="4">
    <location>
        <begin position="20"/>
        <end position="34"/>
    </location>
</feature>
<feature type="active site" description="Proton donor" evidence="2">
    <location>
        <position position="441"/>
    </location>
</feature>
<feature type="binding site" evidence="2">
    <location>
        <position position="439"/>
    </location>
    <ligand>
        <name>Zn(2+)</name>
        <dbReference type="ChEBI" id="CHEBI:29105"/>
    </ligand>
</feature>
<feature type="binding site" evidence="2">
    <location>
        <position position="497"/>
    </location>
    <ligand>
        <name>Zn(2+)</name>
        <dbReference type="ChEBI" id="CHEBI:29105"/>
    </ligand>
</feature>
<feature type="binding site" evidence="2">
    <location>
        <position position="562"/>
    </location>
    <ligand>
        <name>Zn(2+)</name>
        <dbReference type="ChEBI" id="CHEBI:29105"/>
    </ligand>
</feature>
<proteinExistence type="evidence at transcript level"/>
<sequence length="746" mass="82227">MASVLGSGRGSGGLSSQLKCKSKRRRRRRSKRKDKVSILSTFLAPFKYLSPGTTNTEDEDNLSTSSAEVKENRNVSNLGTRPLPPGDWARGGSTPSVKRKRPLEEGNGGHFCKLQLIWKKLSWSMTPKNALVQLHELKPGLQYRMVSQTGPVHAPVFAVAVEVNGLTFEGTGPTKKKAKMRAAEMALKSFVQFPNAFQAHLAMGSSTSPCTDFTSDQADFPDTLFKEFEPSSRNEDFPGCCPVDTEFLSSAYRRGRLLYHTLDLMGQALPDRSRLAPGALGERNPVVVLNELRSGLRYVCLSETAEKPRVKSFVMAVCVDGRTFEGSGRSKKLAKGQAAQAALQALFDIRLPGHIPSRSKSNLLPQDFADSVSQLVTQKFRELTVGLTSVYARHKTLAGIVMTKGLDTKQAQVIVLSSGTKCISGEHISDQGLVVNDCHAEIVARRAFLHFLYTQLELHLSKHQEDPERSIFIRVKEGGYRLRENILFHLYVSTSPCGDARLNSPYEITIDLNSSKHIVRKFRGHLRTKIESGEGTVPVRGPSAVQTWDGILLGEQLVTMSCTDKIASWNVLGLQGALLCHFIEPVYLHSIIVGSLHHTGHLARVMSHRMEGIGQLPASYRQNRPLLSGVSNAEARQPGKSPHFSANWVVGSADLEIINATTGKRSCGGSSRLCKHVFSARWARLHGRLSTRIPGHGDTPSMYCEAKRGAHTYQSVKQQLFKAFQKAGLGTWVRKPPEQDQFLLSL</sequence>
<accession>P97616</accession>
<protein>
    <recommendedName>
        <fullName>Double-stranded RNA-specific editase B2</fullName>
        <ecNumber>3.5.-.-</ecNumber>
    </recommendedName>
    <alternativeName>
        <fullName>RNA-dependent adenosine deaminase 3</fullName>
    </alternativeName>
    <alternativeName>
        <fullName>RNA-editing deaminase 2</fullName>
    </alternativeName>
    <alternativeName>
        <fullName>RNA-editing enzyme 2</fullName>
    </alternativeName>
    <alternativeName>
        <fullName>dsRNA adenosine deaminase B2</fullName>
    </alternativeName>
</protein>